<feature type="signal peptide" evidence="1">
    <location>
        <begin position="1"/>
        <end position="19"/>
    </location>
</feature>
<feature type="chain" id="PRO_0000248530" description="Golgi apparatus protein 1 homolog">
    <location>
        <begin position="20"/>
        <end position="1149"/>
    </location>
</feature>
<feature type="topological domain" description="Extracellular" evidence="1">
    <location>
        <begin position="20"/>
        <end position="1115"/>
    </location>
</feature>
<feature type="transmembrane region" description="Helical" evidence="1">
    <location>
        <begin position="1116"/>
        <end position="1136"/>
    </location>
</feature>
<feature type="topological domain" description="Cytoplasmic" evidence="1">
    <location>
        <begin position="1137"/>
        <end position="1149"/>
    </location>
</feature>
<feature type="repeat" description="Cys-rich GLG1 1">
    <location>
        <begin position="24"/>
        <end position="69"/>
    </location>
</feature>
<feature type="repeat" description="Cys-rich GLG1 2">
    <location>
        <begin position="71"/>
        <end position="135"/>
    </location>
</feature>
<feature type="repeat" description="Cys-rich GLG1 3">
    <location>
        <begin position="139"/>
        <end position="207"/>
    </location>
</feature>
<feature type="repeat" description="Cys-rich GLG1 4">
    <location>
        <begin position="216"/>
        <end position="276"/>
    </location>
</feature>
<feature type="repeat" description="Cys-rich GLG1 5">
    <location>
        <begin position="277"/>
        <end position="344"/>
    </location>
</feature>
<feature type="repeat" description="Cys-rich GLG1 6">
    <location>
        <begin position="349"/>
        <end position="411"/>
    </location>
</feature>
<feature type="repeat" description="Cys-rich GLG1 7">
    <location>
        <begin position="415"/>
        <end position="475"/>
    </location>
</feature>
<feature type="repeat" description="Cys-rich GLG1 8">
    <location>
        <begin position="477"/>
        <end position="549"/>
    </location>
</feature>
<feature type="repeat" description="Cys-rich GLG1 9">
    <location>
        <begin position="551"/>
        <end position="610"/>
    </location>
</feature>
<feature type="repeat" description="Cys-rich GLG1 10">
    <location>
        <begin position="613"/>
        <end position="676"/>
    </location>
</feature>
<feature type="repeat" description="Cys-rich GLG1 11">
    <location>
        <begin position="677"/>
        <end position="736"/>
    </location>
</feature>
<feature type="repeat" description="Cys-rich GLG1 12">
    <location>
        <begin position="743"/>
        <end position="803"/>
    </location>
</feature>
<feature type="repeat" description="Cys-rich GLG1 13">
    <location>
        <begin position="809"/>
        <end position="867"/>
    </location>
</feature>
<feature type="repeat" description="Cys-rich GLG1 14">
    <location>
        <begin position="868"/>
        <end position="938"/>
    </location>
</feature>
<feature type="repeat" description="Cys-rich GLG1 15">
    <location>
        <begin position="945"/>
        <end position="1009"/>
    </location>
</feature>
<feature type="repeat" description="Cys-rich GLG1 16">
    <location>
        <begin position="1010"/>
        <end position="1070"/>
    </location>
</feature>
<feature type="glycosylation site" description="N-linked (GlcNAc...) asparagine" evidence="1">
    <location>
        <position position="133"/>
    </location>
</feature>
<feature type="glycosylation site" description="N-linked (GlcNAc...) asparagine" evidence="2 3">
    <location>
        <position position="411"/>
    </location>
</feature>
<feature type="splice variant" id="VSP_020297" description="In isoform b." evidence="4">
    <location>
        <begin position="762"/>
        <end position="763"/>
    </location>
</feature>
<protein>
    <recommendedName>
        <fullName>Golgi apparatus protein 1 homolog</fullName>
    </recommendedName>
</protein>
<accession>Q19459</accession>
<accession>Q6BEU4</accession>
<reference key="1">
    <citation type="journal article" date="1998" name="Science">
        <title>Genome sequence of the nematode C. elegans: a platform for investigating biology.</title>
        <authorList>
            <consortium name="The C. elegans sequencing consortium"/>
        </authorList>
    </citation>
    <scope>NUCLEOTIDE SEQUENCE [LARGE SCALE GENOMIC DNA]</scope>
    <scope>ALTERNATIVE SPLICING</scope>
    <source>
        <strain>Bristol N2</strain>
    </source>
</reference>
<reference key="2">
    <citation type="journal article" date="2003" name="Nat. Biotechnol.">
        <title>Lectin affinity capture, isotope-coded tagging and mass spectrometry to identify N-linked glycoproteins.</title>
        <authorList>
            <person name="Kaji H."/>
            <person name="Saito H."/>
            <person name="Yamauchi Y."/>
            <person name="Shinkawa T."/>
            <person name="Taoka M."/>
            <person name="Hirabayashi J."/>
            <person name="Kasai K."/>
            <person name="Takahashi N."/>
            <person name="Isobe T."/>
        </authorList>
    </citation>
    <scope>GLYCOSYLATION [LARGE SCALE ANALYSIS] AT ASN-411</scope>
    <scope>IDENTIFICATION BY MASS SPECTROMETRY</scope>
    <source>
        <strain>Bristol N2</strain>
    </source>
</reference>
<reference key="3">
    <citation type="journal article" date="2007" name="Mol. Cell. Proteomics">
        <title>Proteomics reveals N-linked glycoprotein diversity in Caenorhabditis elegans and suggests an atypical translocation mechanism for integral membrane proteins.</title>
        <authorList>
            <person name="Kaji H."/>
            <person name="Kamiie J."/>
            <person name="Kawakami H."/>
            <person name="Kido K."/>
            <person name="Yamauchi Y."/>
            <person name="Shinkawa T."/>
            <person name="Taoka M."/>
            <person name="Takahashi N."/>
            <person name="Isobe T."/>
        </authorList>
    </citation>
    <scope>GLYCOSYLATION [LARGE SCALE ANALYSIS] AT ASN-411</scope>
    <scope>IDENTIFICATION BY MASS SPECTROMETRY</scope>
    <source>
        <strain>Bristol N2</strain>
    </source>
</reference>
<gene>
    <name type="ORF">F14E5.2</name>
</gene>
<sequence>MWRFPLILASVCWLTTAQQQNVANDPDKKLASFDACKADIHKHCSRPDVDLTSDMSILECLQDAGFSETATLSEQCEQLVWDFKVKITQDERFVSAAKQYCEEELKGNAAMNLCTSQTQPGFALSCLMEFTKNVTETGKCHAFLARTERLAFSDFRLVGPFVTKCRAILDKFKCNVLTPDPAHKGVRVAHTQGMALECILDKVVKNAKTQADALQILGDDCKHEVLRLAEMQADDFHLDRPLFFACRLDRERYCKDVPSGEGKVFECLMMNRNDKFMDPECGNLLAERAYLMGRDYRMAHPLTKACQPELTRYKCEPQNQIESAAHFHLAWILLCLENGANQPEHKEVQPSKECAHEMITHRQMMMQHFRMAPELVLNCAQEIDKWCSPRGDIEAEGRTLHCLMEHAESRNETLKLGAQCLQAVQQVVKVADIGRNYKVDKVLYGSCRSLIDGPCAQDAVSETATLTCLMRNVDSPDMVPECEKRLLEVQYFMARDWTMDPQLYEACHQEAVSRCSALDNWHQQHNSDNTVDRGPQVLACLYRSAYDEQNPLSVKCGTQVRQLLHVRAVRVNLIPEIEDSCREALSEFCSHNVKPSEEMMCLQQNFETDNFKRKHPQCFAELTKFTEMEAKDTKLNRALSKACKPVISTHCAQFANEEIDHGDVLECLVNNKDAKEMNNKCRSYVNHFELISLRDYHFSYKFQKACASDIEQSCKGHNNDKGEIIRCLSEVRFEHKVLGSPKDLTDDCKKQLKVAYLQQEQVEFDDKEHMADADPKLSQKCEQEIKMYKCNQADTFEDTIECLRLNFEHLGPECKSMIFYREKIEAVDNSMDDELQKKCRYDIGKFCANSDSENVLECLTNTKIVRLLQRECKAIVKERMQESARDVRLRPQLLTSCRKEAEQYCPEDMKKINMPQYSQTVLDGVVVSCLRDKFRQSISDQNHIDFSPRCSAEVSRAIVEAEFDPQLDPPLYNACKSTINDHCSATIMESGGHFDNVMECLKNDFNKGLIRDKQCSEQVARRLQESLVDIHLDPVLHEACAMDIQRYCRDVPPGHSRIVMCLMDSADKQELSKECSTKLSDRNKLWMKAHSEFQMALPDSWHAFANLVMEHPERNSILGYLAGFIVFILLIGCCCGRVSKKQYIEMKNR</sequence>
<name>GSLG1_CAEEL</name>
<dbReference type="EMBL" id="Z66522">
    <property type="protein sequence ID" value="CAA91405.1"/>
    <property type="molecule type" value="Genomic_DNA"/>
</dbReference>
<dbReference type="EMBL" id="Z66522">
    <property type="protein sequence ID" value="CAH04737.1"/>
    <property type="molecule type" value="Genomic_DNA"/>
</dbReference>
<dbReference type="PIR" id="T20891">
    <property type="entry name" value="T20891"/>
</dbReference>
<dbReference type="RefSeq" id="NP_001022087.1">
    <molecule id="Q19459-1"/>
    <property type="nucleotide sequence ID" value="NM_001026916.7"/>
</dbReference>
<dbReference type="RefSeq" id="NP_001022088.1">
    <property type="nucleotide sequence ID" value="NM_001026917.5"/>
</dbReference>
<dbReference type="RefSeq" id="NP_001367096.1">
    <molecule id="Q19459-2"/>
    <property type="nucleotide sequence ID" value="NM_001381525.2"/>
</dbReference>
<dbReference type="SMR" id="Q19459"/>
<dbReference type="BioGRID" id="39671">
    <property type="interactions" value="7"/>
</dbReference>
<dbReference type="DIP" id="DIP-25688N"/>
<dbReference type="FunCoup" id="Q19459">
    <property type="interactions" value="2874"/>
</dbReference>
<dbReference type="IntAct" id="Q19459">
    <property type="interactions" value="1"/>
</dbReference>
<dbReference type="STRING" id="6239.F14E5.2a.1"/>
<dbReference type="iPTMnet" id="Q19459"/>
<dbReference type="PaxDb" id="6239-F14E5.2a.1"/>
<dbReference type="PeptideAtlas" id="Q19459"/>
<dbReference type="EnsemblMetazoa" id="F14E5.2a.1">
    <molecule id="Q19459-1"/>
    <property type="protein sequence ID" value="F14E5.2a.1"/>
    <property type="gene ID" value="WBGene00008800"/>
</dbReference>
<dbReference type="EnsemblMetazoa" id="F14E5.2b.1">
    <molecule id="Q19459-2"/>
    <property type="protein sequence ID" value="F14E5.2b.1"/>
    <property type="gene ID" value="WBGene00008800"/>
</dbReference>
<dbReference type="GeneID" id="174342"/>
<dbReference type="KEGG" id="cel:CELE_F14E5.2"/>
<dbReference type="UCSC" id="F14E5.2b">
    <molecule id="Q19459-1"/>
    <property type="organism name" value="c. elegans"/>
</dbReference>
<dbReference type="AGR" id="WB:WBGene00008800"/>
<dbReference type="CTD" id="174342"/>
<dbReference type="WormBase" id="F14E5.2a">
    <molecule id="Q19459-1"/>
    <property type="protein sequence ID" value="CE03205"/>
    <property type="gene ID" value="WBGene00008800"/>
</dbReference>
<dbReference type="WormBase" id="F14E5.2b">
    <molecule id="Q19459-2"/>
    <property type="protein sequence ID" value="CE36926"/>
    <property type="gene ID" value="WBGene00008800"/>
</dbReference>
<dbReference type="eggNOG" id="KOG3648">
    <property type="taxonomic scope" value="Eukaryota"/>
</dbReference>
<dbReference type="GeneTree" id="ENSGT00390000011262"/>
<dbReference type="HOGENOM" id="CLU_011063_0_0_1"/>
<dbReference type="InParanoid" id="Q19459"/>
<dbReference type="OMA" id="MMECLIE"/>
<dbReference type="OrthoDB" id="2015434at2759"/>
<dbReference type="PhylomeDB" id="Q19459"/>
<dbReference type="Reactome" id="R-CEL-202733">
    <property type="pathway name" value="Cell surface interactions at the vascular wall"/>
</dbReference>
<dbReference type="PRO" id="PR:Q19459"/>
<dbReference type="Proteomes" id="UP000001940">
    <property type="component" value="Chromosome II"/>
</dbReference>
<dbReference type="Bgee" id="WBGene00008800">
    <property type="expression patterns" value="Expressed in germ line (C elegans) and 4 other cell types or tissues"/>
</dbReference>
<dbReference type="GO" id="GO:0000139">
    <property type="term" value="C:Golgi membrane"/>
    <property type="evidence" value="ECO:0000318"/>
    <property type="project" value="GO_Central"/>
</dbReference>
<dbReference type="GO" id="GO:0017134">
    <property type="term" value="F:fibroblast growth factor binding"/>
    <property type="evidence" value="ECO:0000318"/>
    <property type="project" value="GO_Central"/>
</dbReference>
<dbReference type="InterPro" id="IPR001893">
    <property type="entry name" value="Cys-rich_GLG1_repeat"/>
</dbReference>
<dbReference type="InterPro" id="IPR017873">
    <property type="entry name" value="Cys-rich_GLG1_repeat_euk"/>
</dbReference>
<dbReference type="InterPro" id="IPR039728">
    <property type="entry name" value="GLG1"/>
</dbReference>
<dbReference type="PANTHER" id="PTHR11884:SF1">
    <property type="entry name" value="GOLGI APPARATUS PROTEIN 1"/>
    <property type="match status" value="1"/>
</dbReference>
<dbReference type="PANTHER" id="PTHR11884">
    <property type="entry name" value="SELECTIN LIGAND RELATED"/>
    <property type="match status" value="1"/>
</dbReference>
<dbReference type="Pfam" id="PF00839">
    <property type="entry name" value="Cys_rich_FGFR"/>
    <property type="match status" value="13"/>
</dbReference>
<dbReference type="PROSITE" id="PS51289">
    <property type="entry name" value="GLG1_C_RICH"/>
    <property type="match status" value="16"/>
</dbReference>
<organism>
    <name type="scientific">Caenorhabditis elegans</name>
    <dbReference type="NCBI Taxonomy" id="6239"/>
    <lineage>
        <taxon>Eukaryota</taxon>
        <taxon>Metazoa</taxon>
        <taxon>Ecdysozoa</taxon>
        <taxon>Nematoda</taxon>
        <taxon>Chromadorea</taxon>
        <taxon>Rhabditida</taxon>
        <taxon>Rhabditina</taxon>
        <taxon>Rhabditomorpha</taxon>
        <taxon>Rhabditoidea</taxon>
        <taxon>Rhabditidae</taxon>
        <taxon>Peloderinae</taxon>
        <taxon>Caenorhabditis</taxon>
    </lineage>
</organism>
<keyword id="KW-0025">Alternative splicing</keyword>
<keyword id="KW-0325">Glycoprotein</keyword>
<keyword id="KW-0472">Membrane</keyword>
<keyword id="KW-1185">Reference proteome</keyword>
<keyword id="KW-0677">Repeat</keyword>
<keyword id="KW-0732">Signal</keyword>
<keyword id="KW-0812">Transmembrane</keyword>
<keyword id="KW-1133">Transmembrane helix</keyword>
<proteinExistence type="evidence at protein level"/>
<comment type="subcellular location">
    <subcellularLocation>
        <location evidence="4">Membrane</location>
        <topology evidence="4">Single-pass type I membrane protein</topology>
    </subcellularLocation>
</comment>
<comment type="alternative products">
    <event type="alternative splicing"/>
    <isoform>
        <id>Q19459-1</id>
        <name>a</name>
        <sequence type="displayed"/>
    </isoform>
    <isoform>
        <id>Q19459-2</id>
        <name>b</name>
        <sequence type="described" ref="VSP_020297"/>
    </isoform>
</comment>
<evidence type="ECO:0000255" key="1"/>
<evidence type="ECO:0000269" key="2">
    <source>
    </source>
</evidence>
<evidence type="ECO:0000269" key="3">
    <source>
    </source>
</evidence>
<evidence type="ECO:0000305" key="4"/>